<dbReference type="EMBL" id="AY560863">
    <property type="protein sequence ID" value="AAT44930.1"/>
    <property type="molecule type" value="mRNA"/>
</dbReference>
<dbReference type="EMBL" id="AC021044">
    <property type="protein sequence ID" value="AAF98440.1"/>
    <property type="molecule type" value="Genomic_DNA"/>
</dbReference>
<dbReference type="EMBL" id="AC069471">
    <property type="protein sequence ID" value="AAG51490.1"/>
    <property type="molecule type" value="Genomic_DNA"/>
</dbReference>
<dbReference type="EMBL" id="CP002684">
    <property type="protein sequence ID" value="AEE30926.1"/>
    <property type="molecule type" value="Genomic_DNA"/>
</dbReference>
<dbReference type="EMBL" id="DQ446295">
    <property type="protein sequence ID" value="ABE65659.1"/>
    <property type="molecule type" value="mRNA"/>
</dbReference>
<dbReference type="EMBL" id="DQ652864">
    <property type="protein sequence ID" value="ABK28417.1"/>
    <property type="status" value="ALT_SEQ"/>
    <property type="molecule type" value="mRNA"/>
</dbReference>
<dbReference type="PIR" id="E86407">
    <property type="entry name" value="E86407"/>
</dbReference>
<dbReference type="RefSeq" id="NP_174138.1">
    <property type="nucleotide sequence ID" value="NM_102582.2"/>
</dbReference>
<dbReference type="SMR" id="Q9FZ90"/>
<dbReference type="FunCoup" id="Q9FZ90">
    <property type="interactions" value="9"/>
</dbReference>
<dbReference type="IntAct" id="Q9FZ90">
    <property type="interactions" value="2"/>
</dbReference>
<dbReference type="PaxDb" id="3702-AT1G28160.1"/>
<dbReference type="EnsemblPlants" id="AT1G28160.1">
    <property type="protein sequence ID" value="AT1G28160.1"/>
    <property type="gene ID" value="AT1G28160"/>
</dbReference>
<dbReference type="GeneID" id="839710"/>
<dbReference type="Gramene" id="AT1G28160.1">
    <property type="protein sequence ID" value="AT1G28160.1"/>
    <property type="gene ID" value="AT1G28160"/>
</dbReference>
<dbReference type="KEGG" id="ath:AT1G28160"/>
<dbReference type="Araport" id="AT1G28160"/>
<dbReference type="TAIR" id="AT1G28160"/>
<dbReference type="eggNOG" id="ENOG502RYDI">
    <property type="taxonomic scope" value="Eukaryota"/>
</dbReference>
<dbReference type="HOGENOM" id="CLU_073466_1_0_1"/>
<dbReference type="InParanoid" id="Q9FZ90"/>
<dbReference type="OMA" id="SYNGWPQ"/>
<dbReference type="PhylomeDB" id="Q9FZ90"/>
<dbReference type="PRO" id="PR:Q9FZ90"/>
<dbReference type="Proteomes" id="UP000006548">
    <property type="component" value="Chromosome 1"/>
</dbReference>
<dbReference type="ExpressionAtlas" id="Q9FZ90">
    <property type="expression patterns" value="baseline and differential"/>
</dbReference>
<dbReference type="GO" id="GO:0005634">
    <property type="term" value="C:nucleus"/>
    <property type="evidence" value="ECO:0007669"/>
    <property type="project" value="UniProtKB-SubCell"/>
</dbReference>
<dbReference type="GO" id="GO:0003700">
    <property type="term" value="F:DNA-binding transcription factor activity"/>
    <property type="evidence" value="ECO:0000250"/>
    <property type="project" value="TAIR"/>
</dbReference>
<dbReference type="GO" id="GO:0000976">
    <property type="term" value="F:transcription cis-regulatory region binding"/>
    <property type="evidence" value="ECO:0000353"/>
    <property type="project" value="TAIR"/>
</dbReference>
<dbReference type="GO" id="GO:0009873">
    <property type="term" value="P:ethylene-activated signaling pathway"/>
    <property type="evidence" value="ECO:0000304"/>
    <property type="project" value="TAIR"/>
</dbReference>
<dbReference type="CDD" id="cd00018">
    <property type="entry name" value="AP2"/>
    <property type="match status" value="1"/>
</dbReference>
<dbReference type="FunFam" id="3.30.730.10:FF:000005">
    <property type="entry name" value="ethylene-responsive transcription factor RAP2-11"/>
    <property type="match status" value="1"/>
</dbReference>
<dbReference type="Gene3D" id="3.30.730.10">
    <property type="entry name" value="AP2/ERF domain"/>
    <property type="match status" value="1"/>
</dbReference>
<dbReference type="InterPro" id="IPR017392">
    <property type="entry name" value="AP2/ERF-transcript_factor"/>
</dbReference>
<dbReference type="InterPro" id="IPR001471">
    <property type="entry name" value="AP2/ERF_dom"/>
</dbReference>
<dbReference type="InterPro" id="IPR036955">
    <property type="entry name" value="AP2/ERF_dom_sf"/>
</dbReference>
<dbReference type="InterPro" id="IPR016177">
    <property type="entry name" value="DNA-bd_dom_sf"/>
</dbReference>
<dbReference type="PANTHER" id="PTHR31677">
    <property type="entry name" value="AP2 DOMAIN CLASS TRANSCRIPTION FACTOR"/>
    <property type="match status" value="1"/>
</dbReference>
<dbReference type="PANTHER" id="PTHR31677:SF244">
    <property type="entry name" value="ETHYLENE-RESPONSIVE TRANSCRIPTION FACTOR ERF087"/>
    <property type="match status" value="1"/>
</dbReference>
<dbReference type="Pfam" id="PF00847">
    <property type="entry name" value="AP2"/>
    <property type="match status" value="1"/>
</dbReference>
<dbReference type="PIRSF" id="PIRSF038123">
    <property type="entry name" value="PTI6"/>
    <property type="match status" value="1"/>
</dbReference>
<dbReference type="PRINTS" id="PR00367">
    <property type="entry name" value="ETHRSPELEMNT"/>
</dbReference>
<dbReference type="SMART" id="SM00380">
    <property type="entry name" value="AP2"/>
    <property type="match status" value="1"/>
</dbReference>
<dbReference type="SUPFAM" id="SSF54171">
    <property type="entry name" value="DNA-binding domain"/>
    <property type="match status" value="1"/>
</dbReference>
<dbReference type="PROSITE" id="PS51032">
    <property type="entry name" value="AP2_ERF"/>
    <property type="match status" value="1"/>
</dbReference>
<evidence type="ECO:0000250" key="1"/>
<evidence type="ECO:0000255" key="2">
    <source>
        <dbReference type="PROSITE-ProRule" id="PRU00366"/>
    </source>
</evidence>
<evidence type="ECO:0000256" key="3">
    <source>
        <dbReference type="SAM" id="MobiDB-lite"/>
    </source>
</evidence>
<evidence type="ECO:0000305" key="4"/>
<keyword id="KW-0010">Activator</keyword>
<keyword id="KW-0238">DNA-binding</keyword>
<keyword id="KW-0936">Ethylene signaling pathway</keyword>
<keyword id="KW-0539">Nucleus</keyword>
<keyword id="KW-1185">Reference proteome</keyword>
<keyword id="KW-0804">Transcription</keyword>
<keyword id="KW-0805">Transcription regulation</keyword>
<comment type="function">
    <text evidence="1">Probably acts as a transcriptional activator. Binds to the GCC-box pathogenesis-related promoter element. May be involved in the regulation of gene expression by stress factors and by components of stress signal transduction pathways (By similarity).</text>
</comment>
<comment type="subcellular location">
    <subcellularLocation>
        <location evidence="4">Nucleus</location>
    </subcellularLocation>
</comment>
<comment type="similarity">
    <text evidence="4">Belongs to the AP2/ERF transcription factor family. ERF subfamily.</text>
</comment>
<comment type="sequence caution" evidence="4">
    <conflict type="erroneous termination">
        <sequence resource="EMBL-CDS" id="ABK28417"/>
    </conflict>
    <text>Extended C-terminus.</text>
</comment>
<gene>
    <name type="primary">ERF087</name>
    <name type="ordered locus">At1g28160</name>
    <name type="ORF">F13K9.25</name>
    <name type="ORF">F3H9.18</name>
</gene>
<feature type="chain" id="PRO_0000290410" description="Ethylene-responsive transcription factor ERF087">
    <location>
        <begin position="1"/>
        <end position="245"/>
    </location>
</feature>
<feature type="DNA-binding region" description="AP2/ERF" evidence="2">
    <location>
        <begin position="38"/>
        <end position="95"/>
    </location>
</feature>
<feature type="region of interest" description="Disordered" evidence="3">
    <location>
        <begin position="1"/>
        <end position="34"/>
    </location>
</feature>
<feature type="region of interest" description="Disordered" evidence="3">
    <location>
        <begin position="127"/>
        <end position="148"/>
    </location>
</feature>
<feature type="compositionally biased region" description="Polar residues" evidence="3">
    <location>
        <begin position="1"/>
        <end position="12"/>
    </location>
</feature>
<feature type="compositionally biased region" description="Low complexity" evidence="3">
    <location>
        <begin position="23"/>
        <end position="32"/>
    </location>
</feature>
<feature type="compositionally biased region" description="Low complexity" evidence="3">
    <location>
        <begin position="131"/>
        <end position="148"/>
    </location>
</feature>
<feature type="sequence conflict" description="In Ref. 1; AAT44930." evidence="4" ref="1">
    <original>P</original>
    <variation>A</variation>
    <location>
        <position position="124"/>
    </location>
</feature>
<protein>
    <recommendedName>
        <fullName>Ethylene-responsive transcription factor ERF087</fullName>
    </recommendedName>
</protein>
<reference key="1">
    <citation type="submission" date="2004-02" db="EMBL/GenBank/DDBJ databases">
        <title>Molecular cloning, expression, phylogenetic and functional characterization of the Arabidopsis AP2/EREBP transcription factor family.</title>
        <authorList>
            <person name="Pan Y."/>
            <person name="Gong W."/>
            <person name="Liu D."/>
            <person name="Fu Q."/>
            <person name="Mei W.-Q."/>
            <person name="Song W.-Q."/>
            <person name="Ma L.-G."/>
            <person name="Luo J.-C."/>
            <person name="Deng X.-W."/>
            <person name="Zhu Y.-X."/>
        </authorList>
    </citation>
    <scope>NUCLEOTIDE SEQUENCE [MRNA]</scope>
</reference>
<reference key="2">
    <citation type="journal article" date="2000" name="Nature">
        <title>Sequence and analysis of chromosome 1 of the plant Arabidopsis thaliana.</title>
        <authorList>
            <person name="Theologis A."/>
            <person name="Ecker J.R."/>
            <person name="Palm C.J."/>
            <person name="Federspiel N.A."/>
            <person name="Kaul S."/>
            <person name="White O."/>
            <person name="Alonso J."/>
            <person name="Altafi H."/>
            <person name="Araujo R."/>
            <person name="Bowman C.L."/>
            <person name="Brooks S.Y."/>
            <person name="Buehler E."/>
            <person name="Chan A."/>
            <person name="Chao Q."/>
            <person name="Chen H."/>
            <person name="Cheuk R.F."/>
            <person name="Chin C.W."/>
            <person name="Chung M.K."/>
            <person name="Conn L."/>
            <person name="Conway A.B."/>
            <person name="Conway A.R."/>
            <person name="Creasy T.H."/>
            <person name="Dewar K."/>
            <person name="Dunn P."/>
            <person name="Etgu P."/>
            <person name="Feldblyum T.V."/>
            <person name="Feng J.-D."/>
            <person name="Fong B."/>
            <person name="Fujii C.Y."/>
            <person name="Gill J.E."/>
            <person name="Goldsmith A.D."/>
            <person name="Haas B."/>
            <person name="Hansen N.F."/>
            <person name="Hughes B."/>
            <person name="Huizar L."/>
            <person name="Hunter J.L."/>
            <person name="Jenkins J."/>
            <person name="Johnson-Hopson C."/>
            <person name="Khan S."/>
            <person name="Khaykin E."/>
            <person name="Kim C.J."/>
            <person name="Koo H.L."/>
            <person name="Kremenetskaia I."/>
            <person name="Kurtz D.B."/>
            <person name="Kwan A."/>
            <person name="Lam B."/>
            <person name="Langin-Hooper S."/>
            <person name="Lee A."/>
            <person name="Lee J.M."/>
            <person name="Lenz C.A."/>
            <person name="Li J.H."/>
            <person name="Li Y.-P."/>
            <person name="Lin X."/>
            <person name="Liu S.X."/>
            <person name="Liu Z.A."/>
            <person name="Luros J.S."/>
            <person name="Maiti R."/>
            <person name="Marziali A."/>
            <person name="Militscher J."/>
            <person name="Miranda M."/>
            <person name="Nguyen M."/>
            <person name="Nierman W.C."/>
            <person name="Osborne B.I."/>
            <person name="Pai G."/>
            <person name="Peterson J."/>
            <person name="Pham P.K."/>
            <person name="Rizzo M."/>
            <person name="Rooney T."/>
            <person name="Rowley D."/>
            <person name="Sakano H."/>
            <person name="Salzberg S.L."/>
            <person name="Schwartz J.R."/>
            <person name="Shinn P."/>
            <person name="Southwick A.M."/>
            <person name="Sun H."/>
            <person name="Tallon L.J."/>
            <person name="Tambunga G."/>
            <person name="Toriumi M.J."/>
            <person name="Town C.D."/>
            <person name="Utterback T."/>
            <person name="Van Aken S."/>
            <person name="Vaysberg M."/>
            <person name="Vysotskaia V.S."/>
            <person name="Walker M."/>
            <person name="Wu D."/>
            <person name="Yu G."/>
            <person name="Fraser C.M."/>
            <person name="Venter J.C."/>
            <person name="Davis R.W."/>
        </authorList>
    </citation>
    <scope>NUCLEOTIDE SEQUENCE [LARGE SCALE GENOMIC DNA]</scope>
    <source>
        <strain>cv. Columbia</strain>
    </source>
</reference>
<reference key="3">
    <citation type="journal article" date="2017" name="Plant J.">
        <title>Araport11: a complete reannotation of the Arabidopsis thaliana reference genome.</title>
        <authorList>
            <person name="Cheng C.Y."/>
            <person name="Krishnakumar V."/>
            <person name="Chan A.P."/>
            <person name="Thibaud-Nissen F."/>
            <person name="Schobel S."/>
            <person name="Town C.D."/>
        </authorList>
    </citation>
    <scope>GENOME REANNOTATION</scope>
    <source>
        <strain>cv. Columbia</strain>
    </source>
</reference>
<reference key="4">
    <citation type="journal article" date="2006" name="Plant Biotechnol. J.">
        <title>Simultaneous high-throughput recombinational cloning of open reading frames in closed and open configurations.</title>
        <authorList>
            <person name="Underwood B.A."/>
            <person name="Vanderhaeghen R."/>
            <person name="Whitford R."/>
            <person name="Town C.D."/>
            <person name="Hilson P."/>
        </authorList>
    </citation>
    <scope>NUCLEOTIDE SEQUENCE [LARGE SCALE MRNA]</scope>
    <source>
        <strain>cv. Columbia</strain>
    </source>
</reference>
<reference key="5">
    <citation type="journal article" date="2006" name="Plant Physiol.">
        <title>Genome-wide analysis of the ERF gene family in Arabidopsis and rice.</title>
        <authorList>
            <person name="Nakano T."/>
            <person name="Suzuki K."/>
            <person name="Fujimura T."/>
            <person name="Shinshi H."/>
        </authorList>
    </citation>
    <scope>GENE FAMILY</scope>
    <scope>NOMENCLATURE</scope>
</reference>
<name>ERF87_ARATH</name>
<accession>Q9FZ90</accession>
<accession>A0ME95</accession>
<accession>Q6J9R2</accession>
<proteinExistence type="evidence at transcript level"/>
<sequence length="245" mass="27703">MEFNGNLNAGSCSRSKKSHRQKQQQPQPQPQQHIEEIKYVGVRRRPWGRYAAEIRNPTTKERYWLGTFDTAEEAALAYDRAARSIRGLTARTNFVYSDMPRGSSVTSFVSPDESQRFISELFNPPSQLEATNSNNNNNNNLYSSTNNQNQNSIEFSYNGWPQEAECGYQSITSNAEHCDHELPPLPPSTCFGAELRIPETDSYWNVAHASIDTFAFELDGFVDQNSLGQSGTEGFNSLPSTFFYQ</sequence>
<organism>
    <name type="scientific">Arabidopsis thaliana</name>
    <name type="common">Mouse-ear cress</name>
    <dbReference type="NCBI Taxonomy" id="3702"/>
    <lineage>
        <taxon>Eukaryota</taxon>
        <taxon>Viridiplantae</taxon>
        <taxon>Streptophyta</taxon>
        <taxon>Embryophyta</taxon>
        <taxon>Tracheophyta</taxon>
        <taxon>Spermatophyta</taxon>
        <taxon>Magnoliopsida</taxon>
        <taxon>eudicotyledons</taxon>
        <taxon>Gunneridae</taxon>
        <taxon>Pentapetalae</taxon>
        <taxon>rosids</taxon>
        <taxon>malvids</taxon>
        <taxon>Brassicales</taxon>
        <taxon>Brassicaceae</taxon>
        <taxon>Camelineae</taxon>
        <taxon>Arabidopsis</taxon>
    </lineage>
</organism>